<name>TLDC2_HUMAN</name>
<comment type="similarity">
    <text evidence="3">Belongs to the OXR1 family.</text>
</comment>
<proteinExistence type="evidence at protein level"/>
<gene>
    <name type="primary">TLDC2</name>
</gene>
<keyword id="KW-1267">Proteomics identification</keyword>
<keyword id="KW-1185">Reference proteome</keyword>
<accession>A0PJX2</accession>
<accession>B3KVU8</accession>
<evidence type="ECO:0000255" key="1">
    <source>
        <dbReference type="PROSITE-ProRule" id="PRU01234"/>
    </source>
</evidence>
<evidence type="ECO:0000256" key="2">
    <source>
        <dbReference type="SAM" id="MobiDB-lite"/>
    </source>
</evidence>
<evidence type="ECO:0000305" key="3"/>
<feature type="chain" id="PRO_0000318690" description="TLD domain-containing protein 2">
    <location>
        <begin position="1"/>
        <end position="215"/>
    </location>
</feature>
<feature type="domain" description="TLDc" evidence="1">
    <location>
        <begin position="54"/>
        <end position="215"/>
    </location>
</feature>
<feature type="region of interest" description="Disordered" evidence="2">
    <location>
        <begin position="1"/>
        <end position="46"/>
    </location>
</feature>
<feature type="compositionally biased region" description="Acidic residues" evidence="2">
    <location>
        <begin position="19"/>
        <end position="34"/>
    </location>
</feature>
<feature type="sequence variant" id="VAR_050439" description="In dbSNP:rs3748460.">
    <original>G</original>
    <variation>R</variation>
    <location>
        <position position="102"/>
    </location>
</feature>
<sequence>MRGLRWRYTRLPSQVEDTLSGEEGNEEEEEEEAAPDPAAAPEDPTVPQLTEASQVLSASEIRQLSFHFPPRVTGHPWSLVFCTSRDGFSLQSLYRRMEGCSGPVLLVLRDQDGQIFGAFSSSAIRLSKGFYGTGETFLFSFSPQLKVFKWTGSNSFFVKGDLDSLMMGSGSGRFGLWLDGDLFRGGSSPCPTFNNEVLARQEQFCIQELEAWLLS</sequence>
<protein>
    <recommendedName>
        <fullName>TLD domain-containing protein 2</fullName>
    </recommendedName>
    <alternativeName>
        <fullName>TBC/LysM-associated domain-containing protein 2</fullName>
    </alternativeName>
</protein>
<dbReference type="EMBL" id="AK123544">
    <property type="protein sequence ID" value="BAG53910.1"/>
    <property type="molecule type" value="mRNA"/>
</dbReference>
<dbReference type="EMBL" id="BC127688">
    <property type="protein sequence ID" value="AAI27689.1"/>
    <property type="molecule type" value="mRNA"/>
</dbReference>
<dbReference type="EMBL" id="BC130646">
    <property type="protein sequence ID" value="AAI30647.1"/>
    <property type="molecule type" value="mRNA"/>
</dbReference>
<dbReference type="EMBL" id="BC130648">
    <property type="protein sequence ID" value="AAI30649.1"/>
    <property type="molecule type" value="mRNA"/>
</dbReference>
<dbReference type="CCDS" id="CCDS33465.1"/>
<dbReference type="RefSeq" id="NP_001291712.1">
    <property type="nucleotide sequence ID" value="NM_001304783.1"/>
</dbReference>
<dbReference type="RefSeq" id="NP_542195.1">
    <property type="nucleotide sequence ID" value="NM_080628.3"/>
</dbReference>
<dbReference type="RefSeq" id="XP_016883161.1">
    <property type="nucleotide sequence ID" value="XM_017027672.1"/>
</dbReference>
<dbReference type="RefSeq" id="XP_054178986.1">
    <property type="nucleotide sequence ID" value="XM_054323011.1"/>
</dbReference>
<dbReference type="SMR" id="A0PJX2"/>
<dbReference type="BioGRID" id="126667">
    <property type="interactions" value="13"/>
</dbReference>
<dbReference type="FunCoup" id="A0PJX2">
    <property type="interactions" value="602"/>
</dbReference>
<dbReference type="IntAct" id="A0PJX2">
    <property type="interactions" value="10"/>
</dbReference>
<dbReference type="STRING" id="9606.ENSP00000217320"/>
<dbReference type="GlyGen" id="A0PJX2">
    <property type="glycosylation" value="1 site"/>
</dbReference>
<dbReference type="iPTMnet" id="A0PJX2"/>
<dbReference type="PhosphoSitePlus" id="A0PJX2"/>
<dbReference type="BioMuta" id="TLDC2"/>
<dbReference type="jPOST" id="A0PJX2"/>
<dbReference type="MassIVE" id="A0PJX2"/>
<dbReference type="PaxDb" id="9606-ENSP00000217320"/>
<dbReference type="PeptideAtlas" id="A0PJX2"/>
<dbReference type="ProteomicsDB" id="67"/>
<dbReference type="Antibodypedia" id="62406">
    <property type="antibodies" value="36 antibodies from 9 providers"/>
</dbReference>
<dbReference type="DNASU" id="140711"/>
<dbReference type="Ensembl" id="ENST00000217320.8">
    <property type="protein sequence ID" value="ENSP00000217320.3"/>
    <property type="gene ID" value="ENSG00000101342.10"/>
</dbReference>
<dbReference type="Ensembl" id="ENST00000602922.5">
    <property type="protein sequence ID" value="ENSP00000473323.1"/>
    <property type="gene ID" value="ENSG00000101342.10"/>
</dbReference>
<dbReference type="GeneID" id="140711"/>
<dbReference type="KEGG" id="hsa:140711"/>
<dbReference type="MANE-Select" id="ENST00000217320.8">
    <property type="protein sequence ID" value="ENSP00000217320.3"/>
    <property type="RefSeq nucleotide sequence ID" value="NM_080628.3"/>
    <property type="RefSeq protein sequence ID" value="NP_542195.1"/>
</dbReference>
<dbReference type="UCSC" id="uc002xgg.2">
    <property type="organism name" value="human"/>
</dbReference>
<dbReference type="AGR" id="HGNC:16112"/>
<dbReference type="CTD" id="140711"/>
<dbReference type="DisGeNET" id="140711"/>
<dbReference type="GeneCards" id="TLDC2"/>
<dbReference type="HGNC" id="HGNC:16112">
    <property type="gene designation" value="TLDC2"/>
</dbReference>
<dbReference type="HPA" id="ENSG00000101342">
    <property type="expression patterns" value="Tissue enhanced (intestine)"/>
</dbReference>
<dbReference type="neXtProt" id="NX_A0PJX2"/>
<dbReference type="OpenTargets" id="ENSG00000101342"/>
<dbReference type="PharmGKB" id="PA25658"/>
<dbReference type="VEuPathDB" id="HostDB:ENSG00000101342"/>
<dbReference type="eggNOG" id="KOG2372">
    <property type="taxonomic scope" value="Eukaryota"/>
</dbReference>
<dbReference type="GeneTree" id="ENSGT00940000161648"/>
<dbReference type="HOGENOM" id="CLU_029204_4_1_1"/>
<dbReference type="InParanoid" id="A0PJX2"/>
<dbReference type="OMA" id="HYGLWCD"/>
<dbReference type="OrthoDB" id="26679at2759"/>
<dbReference type="PAN-GO" id="A0PJX2">
    <property type="GO annotations" value="2 GO annotations based on evolutionary models"/>
</dbReference>
<dbReference type="PhylomeDB" id="A0PJX2"/>
<dbReference type="TreeFam" id="TF316541"/>
<dbReference type="PathwayCommons" id="A0PJX2"/>
<dbReference type="SignaLink" id="A0PJX2"/>
<dbReference type="BioGRID-ORCS" id="140711">
    <property type="hits" value="20 hits in 1150 CRISPR screens"/>
</dbReference>
<dbReference type="ChiTaRS" id="TLDC2">
    <property type="organism name" value="human"/>
</dbReference>
<dbReference type="GenomeRNAi" id="140711"/>
<dbReference type="Pharos" id="A0PJX2">
    <property type="development level" value="Tdark"/>
</dbReference>
<dbReference type="PRO" id="PR:A0PJX2"/>
<dbReference type="Proteomes" id="UP000005640">
    <property type="component" value="Chromosome 20"/>
</dbReference>
<dbReference type="RNAct" id="A0PJX2">
    <property type="molecule type" value="protein"/>
</dbReference>
<dbReference type="Bgee" id="ENSG00000101342">
    <property type="expression patterns" value="Expressed in sural nerve and 92 other cell types or tissues"/>
</dbReference>
<dbReference type="ExpressionAtlas" id="A0PJX2">
    <property type="expression patterns" value="baseline and differential"/>
</dbReference>
<dbReference type="GO" id="GO:0005634">
    <property type="term" value="C:nucleus"/>
    <property type="evidence" value="ECO:0000318"/>
    <property type="project" value="GO_Central"/>
</dbReference>
<dbReference type="GO" id="GO:0006979">
    <property type="term" value="P:response to oxidative stress"/>
    <property type="evidence" value="ECO:0000318"/>
    <property type="project" value="GO_Central"/>
</dbReference>
<dbReference type="InterPro" id="IPR006571">
    <property type="entry name" value="TLDc_dom"/>
</dbReference>
<dbReference type="PANTHER" id="PTHR23354">
    <property type="entry name" value="NUCLEOLAR PROTEIN 7/ESTROGEN RECEPTOR COACTIVATOR-RELATED"/>
    <property type="match status" value="1"/>
</dbReference>
<dbReference type="PANTHER" id="PTHR23354:SF65">
    <property type="entry name" value="TLD DOMAIN-CONTAINING PROTEIN 2"/>
    <property type="match status" value="1"/>
</dbReference>
<dbReference type="Pfam" id="PF07534">
    <property type="entry name" value="TLD"/>
    <property type="match status" value="1"/>
</dbReference>
<dbReference type="SMART" id="SM00584">
    <property type="entry name" value="TLDc"/>
    <property type="match status" value="1"/>
</dbReference>
<dbReference type="PROSITE" id="PS51886">
    <property type="entry name" value="TLDC"/>
    <property type="match status" value="1"/>
</dbReference>
<reference key="1">
    <citation type="journal article" date="2004" name="Nat. Genet.">
        <title>Complete sequencing and characterization of 21,243 full-length human cDNAs.</title>
        <authorList>
            <person name="Ota T."/>
            <person name="Suzuki Y."/>
            <person name="Nishikawa T."/>
            <person name="Otsuki T."/>
            <person name="Sugiyama T."/>
            <person name="Irie R."/>
            <person name="Wakamatsu A."/>
            <person name="Hayashi K."/>
            <person name="Sato H."/>
            <person name="Nagai K."/>
            <person name="Kimura K."/>
            <person name="Makita H."/>
            <person name="Sekine M."/>
            <person name="Obayashi M."/>
            <person name="Nishi T."/>
            <person name="Shibahara T."/>
            <person name="Tanaka T."/>
            <person name="Ishii S."/>
            <person name="Yamamoto J."/>
            <person name="Saito K."/>
            <person name="Kawai Y."/>
            <person name="Isono Y."/>
            <person name="Nakamura Y."/>
            <person name="Nagahari K."/>
            <person name="Murakami K."/>
            <person name="Yasuda T."/>
            <person name="Iwayanagi T."/>
            <person name="Wagatsuma M."/>
            <person name="Shiratori A."/>
            <person name="Sudo H."/>
            <person name="Hosoiri T."/>
            <person name="Kaku Y."/>
            <person name="Kodaira H."/>
            <person name="Kondo H."/>
            <person name="Sugawara M."/>
            <person name="Takahashi M."/>
            <person name="Kanda K."/>
            <person name="Yokoi T."/>
            <person name="Furuya T."/>
            <person name="Kikkawa E."/>
            <person name="Omura Y."/>
            <person name="Abe K."/>
            <person name="Kamihara K."/>
            <person name="Katsuta N."/>
            <person name="Sato K."/>
            <person name="Tanikawa M."/>
            <person name="Yamazaki M."/>
            <person name="Ninomiya K."/>
            <person name="Ishibashi T."/>
            <person name="Yamashita H."/>
            <person name="Murakawa K."/>
            <person name="Fujimori K."/>
            <person name="Tanai H."/>
            <person name="Kimata M."/>
            <person name="Watanabe M."/>
            <person name="Hiraoka S."/>
            <person name="Chiba Y."/>
            <person name="Ishida S."/>
            <person name="Ono Y."/>
            <person name="Takiguchi S."/>
            <person name="Watanabe S."/>
            <person name="Yosida M."/>
            <person name="Hotuta T."/>
            <person name="Kusano J."/>
            <person name="Kanehori K."/>
            <person name="Takahashi-Fujii A."/>
            <person name="Hara H."/>
            <person name="Tanase T.-O."/>
            <person name="Nomura Y."/>
            <person name="Togiya S."/>
            <person name="Komai F."/>
            <person name="Hara R."/>
            <person name="Takeuchi K."/>
            <person name="Arita M."/>
            <person name="Imose N."/>
            <person name="Musashino K."/>
            <person name="Yuuki H."/>
            <person name="Oshima A."/>
            <person name="Sasaki N."/>
            <person name="Aotsuka S."/>
            <person name="Yoshikawa Y."/>
            <person name="Matsunawa H."/>
            <person name="Ichihara T."/>
            <person name="Shiohata N."/>
            <person name="Sano S."/>
            <person name="Moriya S."/>
            <person name="Momiyama H."/>
            <person name="Satoh N."/>
            <person name="Takami S."/>
            <person name="Terashima Y."/>
            <person name="Suzuki O."/>
            <person name="Nakagawa S."/>
            <person name="Senoh A."/>
            <person name="Mizoguchi H."/>
            <person name="Goto Y."/>
            <person name="Shimizu F."/>
            <person name="Wakebe H."/>
            <person name="Hishigaki H."/>
            <person name="Watanabe T."/>
            <person name="Sugiyama A."/>
            <person name="Takemoto M."/>
            <person name="Kawakami B."/>
            <person name="Yamazaki M."/>
            <person name="Watanabe K."/>
            <person name="Kumagai A."/>
            <person name="Itakura S."/>
            <person name="Fukuzumi Y."/>
            <person name="Fujimori Y."/>
            <person name="Komiyama M."/>
            <person name="Tashiro H."/>
            <person name="Tanigami A."/>
            <person name="Fujiwara T."/>
            <person name="Ono T."/>
            <person name="Yamada K."/>
            <person name="Fujii Y."/>
            <person name="Ozaki K."/>
            <person name="Hirao M."/>
            <person name="Ohmori Y."/>
            <person name="Kawabata A."/>
            <person name="Hikiji T."/>
            <person name="Kobatake N."/>
            <person name="Inagaki H."/>
            <person name="Ikema Y."/>
            <person name="Okamoto S."/>
            <person name="Okitani R."/>
            <person name="Kawakami T."/>
            <person name="Noguchi S."/>
            <person name="Itoh T."/>
            <person name="Shigeta K."/>
            <person name="Senba T."/>
            <person name="Matsumura K."/>
            <person name="Nakajima Y."/>
            <person name="Mizuno T."/>
            <person name="Morinaga M."/>
            <person name="Sasaki M."/>
            <person name="Togashi T."/>
            <person name="Oyama M."/>
            <person name="Hata H."/>
            <person name="Watanabe M."/>
            <person name="Komatsu T."/>
            <person name="Mizushima-Sugano J."/>
            <person name="Satoh T."/>
            <person name="Shirai Y."/>
            <person name="Takahashi Y."/>
            <person name="Nakagawa K."/>
            <person name="Okumura K."/>
            <person name="Nagase T."/>
            <person name="Nomura N."/>
            <person name="Kikuchi H."/>
            <person name="Masuho Y."/>
            <person name="Yamashita R."/>
            <person name="Nakai K."/>
            <person name="Yada T."/>
            <person name="Nakamura Y."/>
            <person name="Ohara O."/>
            <person name="Isogai T."/>
            <person name="Sugano S."/>
        </authorList>
    </citation>
    <scope>NUCLEOTIDE SEQUENCE [LARGE SCALE MRNA]</scope>
    <source>
        <tissue>Colon</tissue>
    </source>
</reference>
<reference key="2">
    <citation type="journal article" date="2004" name="Genome Res.">
        <title>The status, quality, and expansion of the NIH full-length cDNA project: the Mammalian Gene Collection (MGC).</title>
        <authorList>
            <consortium name="The MGC Project Team"/>
        </authorList>
    </citation>
    <scope>NUCLEOTIDE SEQUENCE [LARGE SCALE MRNA]</scope>
    <source>
        <tissue>Brain</tissue>
    </source>
</reference>
<organism>
    <name type="scientific">Homo sapiens</name>
    <name type="common">Human</name>
    <dbReference type="NCBI Taxonomy" id="9606"/>
    <lineage>
        <taxon>Eukaryota</taxon>
        <taxon>Metazoa</taxon>
        <taxon>Chordata</taxon>
        <taxon>Craniata</taxon>
        <taxon>Vertebrata</taxon>
        <taxon>Euteleostomi</taxon>
        <taxon>Mammalia</taxon>
        <taxon>Eutheria</taxon>
        <taxon>Euarchontoglires</taxon>
        <taxon>Primates</taxon>
        <taxon>Haplorrhini</taxon>
        <taxon>Catarrhini</taxon>
        <taxon>Hominidae</taxon>
        <taxon>Homo</taxon>
    </lineage>
</organism>